<accession>P93124</accession>
<reference key="1">
    <citation type="journal article" date="1996" name="Mol. Immunol.">
        <title>Cloning, sequencing and immunological characterization of Dac g 3, a major allergen from Dactylis glomerata pollen.</title>
        <authorList>
            <person name="Guerin-Marchand C."/>
            <person name="Senechal H."/>
            <person name="Bouin A.P."/>
            <person name="Leduc-Brodard V."/>
            <person name="Taudou G."/>
            <person name="Weyer A."/>
            <person name="Peltre G."/>
            <person name="David B."/>
        </authorList>
    </citation>
    <scope>NUCLEOTIDE SEQUENCE [MRNA]</scope>
    <source>
        <tissue>Pollen</tissue>
    </source>
</reference>
<sequence length="96" mass="10933">VKVTFKVEKGSDPKKLVLDIKYTRPGDTLAEVELRQHGSEEWEPLTKKGNLWEVKSSKPLTGPFNFRFMSKGGMRNVFDEVIPTAFKIGTTYTPEE</sequence>
<name>MPAG3_DACGL</name>
<evidence type="ECO:0000255" key="1">
    <source>
        <dbReference type="PROSITE-ProRule" id="PRU00078"/>
    </source>
</evidence>
<evidence type="ECO:0000305" key="2"/>
<organism>
    <name type="scientific">Dactylis glomerata</name>
    <name type="common">Orchard grass</name>
    <name type="synonym">Cock's-foot grass</name>
    <dbReference type="NCBI Taxonomy" id="4509"/>
    <lineage>
        <taxon>Eukaryota</taxon>
        <taxon>Viridiplantae</taxon>
        <taxon>Streptophyta</taxon>
        <taxon>Embryophyta</taxon>
        <taxon>Tracheophyta</taxon>
        <taxon>Spermatophyta</taxon>
        <taxon>Magnoliopsida</taxon>
        <taxon>Liliopsida</taxon>
        <taxon>Poales</taxon>
        <taxon>Poaceae</taxon>
        <taxon>BOP clade</taxon>
        <taxon>Pooideae</taxon>
        <taxon>Poodae</taxon>
        <taxon>Poeae</taxon>
        <taxon>Poeae Chloroplast Group 2 (Poeae type)</taxon>
        <taxon>Loliodinae</taxon>
        <taxon>Dactylidinae</taxon>
        <taxon>Dactylis</taxon>
    </lineage>
</organism>
<dbReference type="EMBL" id="U25343">
    <property type="protein sequence ID" value="AAB42200.1"/>
    <property type="molecule type" value="mRNA"/>
</dbReference>
<dbReference type="SMR" id="P93124"/>
<dbReference type="Allergome" id="284">
    <property type="allergen name" value="Dac g 3"/>
</dbReference>
<dbReference type="Allergome" id="3241">
    <property type="allergen name" value="Dac g 3.0101"/>
</dbReference>
<dbReference type="GO" id="GO:0005576">
    <property type="term" value="C:extracellular region"/>
    <property type="evidence" value="ECO:0007669"/>
    <property type="project" value="UniProtKB-SubCell"/>
</dbReference>
<dbReference type="GO" id="GO:0009828">
    <property type="term" value="P:plant-type cell wall loosening"/>
    <property type="evidence" value="ECO:0000250"/>
    <property type="project" value="UniProtKB"/>
</dbReference>
<dbReference type="Gene3D" id="2.60.40.760">
    <property type="entry name" value="Expansin, cellulose-binding-like domain"/>
    <property type="match status" value="1"/>
</dbReference>
<dbReference type="InterPro" id="IPR005453">
    <property type="entry name" value="Allergen_Lolp2"/>
</dbReference>
<dbReference type="InterPro" id="IPR007117">
    <property type="entry name" value="Expansin_CBD"/>
</dbReference>
<dbReference type="InterPro" id="IPR036749">
    <property type="entry name" value="Expansin_CBD_sf"/>
</dbReference>
<dbReference type="PANTHER" id="PTHR31692">
    <property type="entry name" value="EXPANSIN-B3"/>
    <property type="match status" value="1"/>
</dbReference>
<dbReference type="PANTHER" id="PTHR31692:SF91">
    <property type="entry name" value="EXPANSIN-LIKE CBD DOMAIN-CONTAINING PROTEIN"/>
    <property type="match status" value="1"/>
</dbReference>
<dbReference type="Pfam" id="PF01357">
    <property type="entry name" value="Expansin_C"/>
    <property type="match status" value="1"/>
</dbReference>
<dbReference type="PRINTS" id="PR01637">
    <property type="entry name" value="LOLP2ALLERGN"/>
</dbReference>
<dbReference type="SUPFAM" id="SSF49590">
    <property type="entry name" value="PHL pollen allergen"/>
    <property type="match status" value="1"/>
</dbReference>
<dbReference type="PROSITE" id="PS50843">
    <property type="entry name" value="EXPANSIN_CBD"/>
    <property type="match status" value="1"/>
</dbReference>
<protein>
    <recommendedName>
        <fullName>Pollen allergen Dac g 3</fullName>
    </recommendedName>
    <alternativeName>
        <fullName>Allergen Dac g III</fullName>
    </alternativeName>
    <allergenName>Dac g 3</allergenName>
</protein>
<comment type="subcellular location">
    <subcellularLocation>
        <location>Secreted</location>
    </subcellularLocation>
</comment>
<comment type="allergen">
    <text>Causes an allergic reaction in human. Causes grass pollen allergy. Binds to IgE.</text>
</comment>
<comment type="similarity">
    <text evidence="2">Belongs to the expansin family. Expansin B subfamily.</text>
</comment>
<proteinExistence type="evidence at protein level"/>
<feature type="chain" id="PRO_0000154571" description="Pollen allergen Dac g 3">
    <location>
        <begin position="1" status="less than"/>
        <end position="96"/>
    </location>
</feature>
<feature type="domain" description="Expansin-like CBD" evidence="1">
    <location>
        <begin position="14"/>
        <end position="94"/>
    </location>
</feature>
<feature type="non-terminal residue">
    <location>
        <position position="1"/>
    </location>
</feature>
<keyword id="KW-0020">Allergen</keyword>
<keyword id="KW-0964">Secreted</keyword>